<comment type="function">
    <text evidence="1">Is required not only for elongation of protein synthesis but also for the initiation of all mRNA translation through initiator tRNA(fMet) aminoacylation.</text>
</comment>
<comment type="catalytic activity">
    <reaction evidence="1">
        <text>tRNA(Met) + L-methionine + ATP = L-methionyl-tRNA(Met) + AMP + diphosphate</text>
        <dbReference type="Rhea" id="RHEA:13481"/>
        <dbReference type="Rhea" id="RHEA-COMP:9667"/>
        <dbReference type="Rhea" id="RHEA-COMP:9698"/>
        <dbReference type="ChEBI" id="CHEBI:30616"/>
        <dbReference type="ChEBI" id="CHEBI:33019"/>
        <dbReference type="ChEBI" id="CHEBI:57844"/>
        <dbReference type="ChEBI" id="CHEBI:78442"/>
        <dbReference type="ChEBI" id="CHEBI:78530"/>
        <dbReference type="ChEBI" id="CHEBI:456215"/>
        <dbReference type="EC" id="6.1.1.10"/>
    </reaction>
</comment>
<comment type="cofactor">
    <cofactor evidence="1">
        <name>Zn(2+)</name>
        <dbReference type="ChEBI" id="CHEBI:29105"/>
    </cofactor>
    <text evidence="1">Binds 1 zinc ion per subunit.</text>
</comment>
<comment type="subunit">
    <text evidence="1">Homodimer.</text>
</comment>
<comment type="subcellular location">
    <subcellularLocation>
        <location evidence="1">Cytoplasm</location>
    </subcellularLocation>
</comment>
<comment type="similarity">
    <text evidence="1">Belongs to the class-I aminoacyl-tRNA synthetase family. MetG type 1 subfamily.</text>
</comment>
<comment type="sequence caution" evidence="2">
    <conflict type="erroneous initiation">
        <sequence resource="EMBL-CDS" id="ABQ77298"/>
    </conflict>
</comment>
<reference key="1">
    <citation type="submission" date="2007-05" db="EMBL/GenBank/DDBJ databases">
        <title>Complete sequence of Pseudomonas putida F1.</title>
        <authorList>
            <consortium name="US DOE Joint Genome Institute"/>
            <person name="Copeland A."/>
            <person name="Lucas S."/>
            <person name="Lapidus A."/>
            <person name="Barry K."/>
            <person name="Detter J.C."/>
            <person name="Glavina del Rio T."/>
            <person name="Hammon N."/>
            <person name="Israni S."/>
            <person name="Dalin E."/>
            <person name="Tice H."/>
            <person name="Pitluck S."/>
            <person name="Chain P."/>
            <person name="Malfatti S."/>
            <person name="Shin M."/>
            <person name="Vergez L."/>
            <person name="Schmutz J."/>
            <person name="Larimer F."/>
            <person name="Land M."/>
            <person name="Hauser L."/>
            <person name="Kyrpides N."/>
            <person name="Lykidis A."/>
            <person name="Parales R."/>
            <person name="Richardson P."/>
        </authorList>
    </citation>
    <scope>NUCLEOTIDE SEQUENCE [LARGE SCALE GENOMIC DNA]</scope>
    <source>
        <strain>ATCC 700007 / DSM 6899 / JCM 31910 / BCRC 17059 / LMG 24140 / F1</strain>
    </source>
</reference>
<proteinExistence type="inferred from homology"/>
<dbReference type="EC" id="6.1.1.10" evidence="1"/>
<dbReference type="EMBL" id="CP000712">
    <property type="protein sequence ID" value="ABQ77298.1"/>
    <property type="status" value="ALT_INIT"/>
    <property type="molecule type" value="Genomic_DNA"/>
</dbReference>
<dbReference type="SMR" id="A5VZI8"/>
<dbReference type="KEGG" id="ppf:Pput_1137"/>
<dbReference type="eggNOG" id="COG0073">
    <property type="taxonomic scope" value="Bacteria"/>
</dbReference>
<dbReference type="eggNOG" id="COG0143">
    <property type="taxonomic scope" value="Bacteria"/>
</dbReference>
<dbReference type="HOGENOM" id="CLU_009710_7_0_6"/>
<dbReference type="GO" id="GO:0005829">
    <property type="term" value="C:cytosol"/>
    <property type="evidence" value="ECO:0007669"/>
    <property type="project" value="TreeGrafter"/>
</dbReference>
<dbReference type="GO" id="GO:0005524">
    <property type="term" value="F:ATP binding"/>
    <property type="evidence" value="ECO:0007669"/>
    <property type="project" value="UniProtKB-UniRule"/>
</dbReference>
<dbReference type="GO" id="GO:0046872">
    <property type="term" value="F:metal ion binding"/>
    <property type="evidence" value="ECO:0007669"/>
    <property type="project" value="UniProtKB-KW"/>
</dbReference>
<dbReference type="GO" id="GO:0004825">
    <property type="term" value="F:methionine-tRNA ligase activity"/>
    <property type="evidence" value="ECO:0007669"/>
    <property type="project" value="UniProtKB-UniRule"/>
</dbReference>
<dbReference type="GO" id="GO:0000049">
    <property type="term" value="F:tRNA binding"/>
    <property type="evidence" value="ECO:0007669"/>
    <property type="project" value="UniProtKB-KW"/>
</dbReference>
<dbReference type="GO" id="GO:0006431">
    <property type="term" value="P:methionyl-tRNA aminoacylation"/>
    <property type="evidence" value="ECO:0007669"/>
    <property type="project" value="UniProtKB-UniRule"/>
</dbReference>
<dbReference type="CDD" id="cd07957">
    <property type="entry name" value="Anticodon_Ia_Met"/>
    <property type="match status" value="1"/>
</dbReference>
<dbReference type="CDD" id="cd00814">
    <property type="entry name" value="MetRS_core"/>
    <property type="match status" value="1"/>
</dbReference>
<dbReference type="CDD" id="cd02800">
    <property type="entry name" value="tRNA_bind_EcMetRS_like"/>
    <property type="match status" value="1"/>
</dbReference>
<dbReference type="FunFam" id="1.10.730.10:FF:000005">
    <property type="entry name" value="Methionine--tRNA ligase"/>
    <property type="match status" value="1"/>
</dbReference>
<dbReference type="FunFam" id="2.20.28.20:FF:000001">
    <property type="entry name" value="Methionine--tRNA ligase"/>
    <property type="match status" value="1"/>
</dbReference>
<dbReference type="FunFam" id="2.40.50.140:FF:000042">
    <property type="entry name" value="Methionine--tRNA ligase"/>
    <property type="match status" value="1"/>
</dbReference>
<dbReference type="Gene3D" id="3.40.50.620">
    <property type="entry name" value="HUPs"/>
    <property type="match status" value="1"/>
</dbReference>
<dbReference type="Gene3D" id="1.10.730.10">
    <property type="entry name" value="Isoleucyl-tRNA Synthetase, Domain 1"/>
    <property type="match status" value="1"/>
</dbReference>
<dbReference type="Gene3D" id="2.20.28.20">
    <property type="entry name" value="Methionyl-tRNA synthetase, Zn-domain"/>
    <property type="match status" value="1"/>
</dbReference>
<dbReference type="Gene3D" id="2.40.50.140">
    <property type="entry name" value="Nucleic acid-binding proteins"/>
    <property type="match status" value="1"/>
</dbReference>
<dbReference type="HAMAP" id="MF_00098">
    <property type="entry name" value="Met_tRNA_synth_type1"/>
    <property type="match status" value="1"/>
</dbReference>
<dbReference type="InterPro" id="IPR001412">
    <property type="entry name" value="aa-tRNA-synth_I_CS"/>
</dbReference>
<dbReference type="InterPro" id="IPR041872">
    <property type="entry name" value="Anticodon_Met"/>
</dbReference>
<dbReference type="InterPro" id="IPR004495">
    <property type="entry name" value="Met-tRNA-synth_bsu_C"/>
</dbReference>
<dbReference type="InterPro" id="IPR023458">
    <property type="entry name" value="Met-tRNA_ligase_1"/>
</dbReference>
<dbReference type="InterPro" id="IPR014758">
    <property type="entry name" value="Met-tRNA_synth"/>
</dbReference>
<dbReference type="InterPro" id="IPR015413">
    <property type="entry name" value="Methionyl/Leucyl_tRNA_Synth"/>
</dbReference>
<dbReference type="InterPro" id="IPR033911">
    <property type="entry name" value="MetRS_core"/>
</dbReference>
<dbReference type="InterPro" id="IPR029038">
    <property type="entry name" value="MetRS_Zn"/>
</dbReference>
<dbReference type="InterPro" id="IPR012340">
    <property type="entry name" value="NA-bd_OB-fold"/>
</dbReference>
<dbReference type="InterPro" id="IPR014729">
    <property type="entry name" value="Rossmann-like_a/b/a_fold"/>
</dbReference>
<dbReference type="InterPro" id="IPR002547">
    <property type="entry name" value="tRNA-bd_dom"/>
</dbReference>
<dbReference type="InterPro" id="IPR009080">
    <property type="entry name" value="tRNAsynth_Ia_anticodon-bd"/>
</dbReference>
<dbReference type="NCBIfam" id="TIGR00398">
    <property type="entry name" value="metG"/>
    <property type="match status" value="1"/>
</dbReference>
<dbReference type="NCBIfam" id="TIGR00399">
    <property type="entry name" value="metG_C_term"/>
    <property type="match status" value="1"/>
</dbReference>
<dbReference type="NCBIfam" id="NF001100">
    <property type="entry name" value="PRK00133.1"/>
    <property type="match status" value="1"/>
</dbReference>
<dbReference type="PANTHER" id="PTHR45765">
    <property type="entry name" value="METHIONINE--TRNA LIGASE"/>
    <property type="match status" value="1"/>
</dbReference>
<dbReference type="PANTHER" id="PTHR45765:SF1">
    <property type="entry name" value="METHIONINE--TRNA LIGASE, CYTOPLASMIC"/>
    <property type="match status" value="1"/>
</dbReference>
<dbReference type="Pfam" id="PF19303">
    <property type="entry name" value="Anticodon_3"/>
    <property type="match status" value="1"/>
</dbReference>
<dbReference type="Pfam" id="PF09334">
    <property type="entry name" value="tRNA-synt_1g"/>
    <property type="match status" value="1"/>
</dbReference>
<dbReference type="Pfam" id="PF01588">
    <property type="entry name" value="tRNA_bind"/>
    <property type="match status" value="1"/>
</dbReference>
<dbReference type="PRINTS" id="PR01041">
    <property type="entry name" value="TRNASYNTHMET"/>
</dbReference>
<dbReference type="SUPFAM" id="SSF47323">
    <property type="entry name" value="Anticodon-binding domain of a subclass of class I aminoacyl-tRNA synthetases"/>
    <property type="match status" value="1"/>
</dbReference>
<dbReference type="SUPFAM" id="SSF57770">
    <property type="entry name" value="Methionyl-tRNA synthetase (MetRS), Zn-domain"/>
    <property type="match status" value="1"/>
</dbReference>
<dbReference type="SUPFAM" id="SSF50249">
    <property type="entry name" value="Nucleic acid-binding proteins"/>
    <property type="match status" value="1"/>
</dbReference>
<dbReference type="SUPFAM" id="SSF52374">
    <property type="entry name" value="Nucleotidylyl transferase"/>
    <property type="match status" value="1"/>
</dbReference>
<dbReference type="PROSITE" id="PS00178">
    <property type="entry name" value="AA_TRNA_LIGASE_I"/>
    <property type="match status" value="1"/>
</dbReference>
<dbReference type="PROSITE" id="PS50886">
    <property type="entry name" value="TRBD"/>
    <property type="match status" value="1"/>
</dbReference>
<name>SYM_PSEP1</name>
<protein>
    <recommendedName>
        <fullName evidence="1">Methionine--tRNA ligase</fullName>
        <ecNumber evidence="1">6.1.1.10</ecNumber>
    </recommendedName>
    <alternativeName>
        <fullName evidence="1">Methionyl-tRNA synthetase</fullName>
        <shortName evidence="1">MetRS</shortName>
    </alternativeName>
</protein>
<keyword id="KW-0030">Aminoacyl-tRNA synthetase</keyword>
<keyword id="KW-0067">ATP-binding</keyword>
<keyword id="KW-0963">Cytoplasm</keyword>
<keyword id="KW-0436">Ligase</keyword>
<keyword id="KW-0479">Metal-binding</keyword>
<keyword id="KW-0547">Nucleotide-binding</keyword>
<keyword id="KW-0648">Protein biosynthesis</keyword>
<keyword id="KW-0694">RNA-binding</keyword>
<keyword id="KW-0820">tRNA-binding</keyword>
<keyword id="KW-0862">Zinc</keyword>
<accession>A5VZI8</accession>
<sequence length="679" mass="75151">MSEPRQILVTSALPYANGSIHLGHMLEYIQTDMWVRFQKLRGNQCIYVCADDAHGSAIMLRAEKEGITPEQLIANVQAEHSSDFADFLVDFDNFHSTHSEENRELSSLIYSRLREAGHIATRSVTQYFDPEKGMFLADRFIKGTCPKCAAEDQYGDNCEKCGATYAPTELKNPKSAISGATPVLRDSQHFFFKLPDFQAMLQQWTRSGTLQDAVANKLAEWLDSGLQEWDISRDAPYFGFEIPGEPGKYFYVWLDAPIGYMASFKNLCARRPELDFDAFWNEGSKAELYHFIGKDIVNFHALFWPAMLEGAGFRKPTAVNVHGYLTVNGAKMSKSRGTFIKARTYLDHLQPEYLRYYYAAKLGRGVDDLDLNLEDFVQKVNSDLVGKVVNIASRCAGFIHKGNEGVMVGGDAAPELTEAFLAAAPSIAEAYEARDFGRAMREIMALADRANAWIADKAPWSLAKQEGKQDEVQAICAQGINLFRQLVIFLKPVLPVLAADAEAFLNVAPLTWNDHLTRLENHTLNPFKALMSRIEPAKVEAMVAASKEDLLAAEAKAPAGNGELAKDPLSAEIEFDTFAAVDLRVALIVKAEAVAGADKLLQLTLDIGDERRNVFSGIKSAYPDPSKLEGRLTMMVANLKPRKMRFGVSEGMVMAAGPGGEEIYLLSPDSGAKPGQRIK</sequence>
<organism>
    <name type="scientific">Pseudomonas putida (strain ATCC 700007 / DSM 6899 / JCM 31910 / BCRC 17059 / LMG 24140 / F1)</name>
    <dbReference type="NCBI Taxonomy" id="351746"/>
    <lineage>
        <taxon>Bacteria</taxon>
        <taxon>Pseudomonadati</taxon>
        <taxon>Pseudomonadota</taxon>
        <taxon>Gammaproteobacteria</taxon>
        <taxon>Pseudomonadales</taxon>
        <taxon>Pseudomonadaceae</taxon>
        <taxon>Pseudomonas</taxon>
    </lineage>
</organism>
<evidence type="ECO:0000255" key="1">
    <source>
        <dbReference type="HAMAP-Rule" id="MF_00098"/>
    </source>
</evidence>
<evidence type="ECO:0000305" key="2"/>
<feature type="chain" id="PRO_0000331873" description="Methionine--tRNA ligase">
    <location>
        <begin position="1"/>
        <end position="679"/>
    </location>
</feature>
<feature type="domain" description="tRNA-binding" evidence="1">
    <location>
        <begin position="577"/>
        <end position="679"/>
    </location>
</feature>
<feature type="short sequence motif" description="'HIGH' region">
    <location>
        <begin position="14"/>
        <end position="24"/>
    </location>
</feature>
<feature type="short sequence motif" description="'KMSKS' region">
    <location>
        <begin position="331"/>
        <end position="335"/>
    </location>
</feature>
<feature type="binding site" evidence="1">
    <location>
        <position position="145"/>
    </location>
    <ligand>
        <name>Zn(2+)</name>
        <dbReference type="ChEBI" id="CHEBI:29105"/>
    </ligand>
</feature>
<feature type="binding site" evidence="1">
    <location>
        <position position="148"/>
    </location>
    <ligand>
        <name>Zn(2+)</name>
        <dbReference type="ChEBI" id="CHEBI:29105"/>
    </ligand>
</feature>
<feature type="binding site" evidence="1">
    <location>
        <position position="158"/>
    </location>
    <ligand>
        <name>Zn(2+)</name>
        <dbReference type="ChEBI" id="CHEBI:29105"/>
    </ligand>
</feature>
<feature type="binding site" evidence="1">
    <location>
        <position position="161"/>
    </location>
    <ligand>
        <name>Zn(2+)</name>
        <dbReference type="ChEBI" id="CHEBI:29105"/>
    </ligand>
</feature>
<feature type="binding site" evidence="1">
    <location>
        <position position="334"/>
    </location>
    <ligand>
        <name>ATP</name>
        <dbReference type="ChEBI" id="CHEBI:30616"/>
    </ligand>
</feature>
<gene>
    <name evidence="1" type="primary">metG</name>
    <name type="ordered locus">Pput_1137</name>
</gene>